<dbReference type="EC" id="4.4.1.14"/>
<dbReference type="EMBL" id="M58323">
    <property type="protein sequence ID" value="AAA33113.1"/>
    <property type="molecule type" value="mRNA"/>
</dbReference>
<dbReference type="EMBL" id="M61195">
    <property type="protein sequence ID" value="AAA33111.1"/>
    <property type="molecule type" value="Genomic_DNA"/>
</dbReference>
<dbReference type="PIR" id="A41141">
    <property type="entry name" value="A41141"/>
</dbReference>
<dbReference type="SMR" id="P23279"/>
<dbReference type="BRENDA" id="4.4.1.14">
    <property type="organism ID" value="1740"/>
</dbReference>
<dbReference type="UniPathway" id="UPA00384">
    <property type="reaction ID" value="UER00562"/>
</dbReference>
<dbReference type="GO" id="GO:0016847">
    <property type="term" value="F:1-aminocyclopropane-1-carboxylate synthase activity"/>
    <property type="evidence" value="ECO:0007669"/>
    <property type="project" value="UniProtKB-EC"/>
</dbReference>
<dbReference type="GO" id="GO:0030170">
    <property type="term" value="F:pyridoxal phosphate binding"/>
    <property type="evidence" value="ECO:0007669"/>
    <property type="project" value="InterPro"/>
</dbReference>
<dbReference type="GO" id="GO:0008483">
    <property type="term" value="F:transaminase activity"/>
    <property type="evidence" value="ECO:0007669"/>
    <property type="project" value="TreeGrafter"/>
</dbReference>
<dbReference type="GO" id="GO:0009693">
    <property type="term" value="P:ethylene biosynthetic process"/>
    <property type="evidence" value="ECO:0007669"/>
    <property type="project" value="UniProtKB-UniPathway"/>
</dbReference>
<dbReference type="GO" id="GO:0009835">
    <property type="term" value="P:fruit ripening"/>
    <property type="evidence" value="ECO:0007669"/>
    <property type="project" value="UniProtKB-KW"/>
</dbReference>
<dbReference type="CDD" id="cd00609">
    <property type="entry name" value="AAT_like"/>
    <property type="match status" value="1"/>
</dbReference>
<dbReference type="Gene3D" id="3.90.1150.10">
    <property type="entry name" value="Aspartate Aminotransferase, domain 1"/>
    <property type="match status" value="1"/>
</dbReference>
<dbReference type="Gene3D" id="3.40.640.10">
    <property type="entry name" value="Type I PLP-dependent aspartate aminotransferase-like (Major domain)"/>
    <property type="match status" value="1"/>
</dbReference>
<dbReference type="InterPro" id="IPR004839">
    <property type="entry name" value="Aminotransferase_I/II_large"/>
</dbReference>
<dbReference type="InterPro" id="IPR050478">
    <property type="entry name" value="Ethylene_sulfur-biosynth"/>
</dbReference>
<dbReference type="InterPro" id="IPR004838">
    <property type="entry name" value="NHTrfase_class1_PyrdxlP-BS"/>
</dbReference>
<dbReference type="InterPro" id="IPR015424">
    <property type="entry name" value="PyrdxlP-dep_Trfase"/>
</dbReference>
<dbReference type="InterPro" id="IPR015421">
    <property type="entry name" value="PyrdxlP-dep_Trfase_major"/>
</dbReference>
<dbReference type="InterPro" id="IPR015422">
    <property type="entry name" value="PyrdxlP-dep_Trfase_small"/>
</dbReference>
<dbReference type="PANTHER" id="PTHR43795:SF74">
    <property type="entry name" value="1-AMINOCYCLOPROPANE-1-CARBOXYLATE SYNTHASE-LIKE PROTEIN 1"/>
    <property type="match status" value="1"/>
</dbReference>
<dbReference type="PANTHER" id="PTHR43795">
    <property type="entry name" value="BIFUNCTIONAL ASPARTATE AMINOTRANSFERASE AND GLUTAMATE/ASPARTATE-PREPHENATE AMINOTRANSFERASE-RELATED"/>
    <property type="match status" value="1"/>
</dbReference>
<dbReference type="Pfam" id="PF00155">
    <property type="entry name" value="Aminotran_1_2"/>
    <property type="match status" value="1"/>
</dbReference>
<dbReference type="PRINTS" id="PR00753">
    <property type="entry name" value="ACCSYNTHASE"/>
</dbReference>
<dbReference type="SUPFAM" id="SSF53383">
    <property type="entry name" value="PLP-dependent transferases"/>
    <property type="match status" value="1"/>
</dbReference>
<dbReference type="PROSITE" id="PS00105">
    <property type="entry name" value="AA_TRANSFER_CLASS_1"/>
    <property type="match status" value="1"/>
</dbReference>
<reference key="1">
    <citation type="journal article" date="1991" name="J. Biol. Chem.">
        <title>The 1-aminocyclopropane-1-carboxylate synthase of Cucurbita. Purification, properties, expression in Escherichia coli, and primary structure determination by DNA sequence analysis.</title>
        <authorList>
            <person name="Sato T."/>
            <person name="Oeller P.W."/>
            <person name="Theologis A."/>
        </authorList>
    </citation>
    <scope>NUCLEOTIDE SEQUENCE [MRNA]</scope>
</reference>
<reference key="2">
    <citation type="journal article" date="1991" name="Proc. Natl. Acad. Sci. U.S.A.">
        <title>Two genes encoding 1-aminocyclopropane-1-carboxylate synthase in zucchini (Cucurbita pepo) are clustered and similar but differentially regulated.</title>
        <authorList>
            <person name="Huang P.-L."/>
            <person name="Parks J.E."/>
            <person name="Rottman W.H."/>
            <person name="Theologis A."/>
        </authorList>
    </citation>
    <scope>NUCLEOTIDE SEQUENCE [GENOMIC DNA]</scope>
</reference>
<sequence length="493" mass="55780">MGFHQIDERNQALLSKIALDDGHGENSPYFDGWKAYDNDPFHPENNPLGVIQMGLAENQLSFDMIVDWIRKHPEASICTPEGLERFKSIANFQDYHGLPEFRNAIANFMGKVRGGRVKFDPSRIVMGGGATGASETVIFCLADPGDAFLVPSPYYAGFDRDLKWRTRAQIIRVHCNGSNNFQVTKAALEIAYKKAQEANMKVKGVIITNPSNPLGTTYDRDTLKTLVTFVNQHDIHLICDEIYSATVFKAPTFTSIAEIVEQMEHCKKELIHILYSLSKDMGLPGFRVGIIYSYNDVVVRRARQMSSFGLVSSQTQHLLAAMLSDEDFVDKFLAENSKRVGERHARFTKELDKMGITCLNSNAGVFVWMDLRRLLKDQTFKAEMELWRVIINEVKLNVSPGSSFHVTEPGWFRVCFANMDDNTVDVALNRIHSFVENIDKKEDNTVAMPSKTRHRDNKLRLSFSFSGRRYDEGNVLNSPHTMSPHSPLVIAKN</sequence>
<name>1A11_CUCPE</name>
<proteinExistence type="evidence at protein level"/>
<keyword id="KW-0266">Ethylene biosynthesis</keyword>
<keyword id="KW-0292">Fruit ripening</keyword>
<keyword id="KW-0456">Lyase</keyword>
<keyword id="KW-0663">Pyridoxal phosphate</keyword>
<keyword id="KW-0949">S-adenosyl-L-methionine</keyword>
<evidence type="ECO:0000305" key="1"/>
<accession>P23279</accession>
<gene>
    <name type="primary">ACC1A</name>
</gene>
<comment type="function">
    <text>Catalyzes the formation of 1-aminocyclopropane-1-carboxylate, a direct precursor of ethylene in higher plants.</text>
</comment>
<comment type="catalytic activity">
    <reaction>
        <text>S-adenosyl-L-methionine = 1-aminocyclopropane-1-carboxylate + S-methyl-5'-thioadenosine + H(+)</text>
        <dbReference type="Rhea" id="RHEA:21744"/>
        <dbReference type="ChEBI" id="CHEBI:15378"/>
        <dbReference type="ChEBI" id="CHEBI:17509"/>
        <dbReference type="ChEBI" id="CHEBI:58360"/>
        <dbReference type="ChEBI" id="CHEBI:59789"/>
        <dbReference type="EC" id="4.4.1.14"/>
    </reaction>
</comment>
<comment type="cofactor">
    <cofactor>
        <name>pyridoxal 5'-phosphate</name>
        <dbReference type="ChEBI" id="CHEBI:597326"/>
    </cofactor>
</comment>
<comment type="pathway">
    <text>Alkene biosynthesis; ethylene biosynthesis via S-adenosyl-L-methionine; ethylene from S-adenosyl-L-methionine: step 1/2.</text>
</comment>
<comment type="subunit">
    <text>Homodimer.</text>
</comment>
<comment type="induction">
    <text>By wounding in fruit and etiolated hypocotyls. By indoleacetic acid (IAA)/benzyladenine/LiCl only in fruit tissue.</text>
</comment>
<comment type="similarity">
    <text evidence="1">Belongs to the class-I pyridoxal-phosphate-dependent aminotransferase family.</text>
</comment>
<organism>
    <name type="scientific">Cucurbita pepo</name>
    <name type="common">Vegetable marrow</name>
    <name type="synonym">Summer squash</name>
    <dbReference type="NCBI Taxonomy" id="3663"/>
    <lineage>
        <taxon>Eukaryota</taxon>
        <taxon>Viridiplantae</taxon>
        <taxon>Streptophyta</taxon>
        <taxon>Embryophyta</taxon>
        <taxon>Tracheophyta</taxon>
        <taxon>Spermatophyta</taxon>
        <taxon>Magnoliopsida</taxon>
        <taxon>eudicotyledons</taxon>
        <taxon>Gunneridae</taxon>
        <taxon>Pentapetalae</taxon>
        <taxon>rosids</taxon>
        <taxon>fabids</taxon>
        <taxon>Cucurbitales</taxon>
        <taxon>Cucurbitaceae</taxon>
        <taxon>Cucurbiteae</taxon>
        <taxon>Cucurbita</taxon>
    </lineage>
</organism>
<protein>
    <recommendedName>
        <fullName>1-aminocyclopropane-1-carboxylate synthase 1</fullName>
        <shortName>ACC synthase 1</shortName>
        <ecNumber>4.4.1.14</ecNumber>
    </recommendedName>
    <alternativeName>
        <fullName>S-adenosyl-L-methionine methylthioadenosine-lyase</fullName>
    </alternativeName>
</protein>
<feature type="chain" id="PRO_0000123909" description="1-aminocyclopropane-1-carboxylate synthase 1">
    <location>
        <begin position="1"/>
        <end position="493"/>
    </location>
</feature>
<feature type="modified residue" description="N6-(pyridoxal phosphate)lysine">
    <location>
        <position position="279"/>
    </location>
</feature>
<feature type="sequence conflict" description="In Ref. 2; AAA33111." evidence="1" ref="2">
    <original>G</original>
    <variation>R</variation>
    <location>
        <position position="177"/>
    </location>
</feature>